<gene>
    <name type="primary">kpsE</name>
    <name type="ordered locus">c3687</name>
</gene>
<name>KPSE_ECOL6</name>
<keyword id="KW-0972">Capsule biogenesis/degradation</keyword>
<keyword id="KW-0997">Cell inner membrane</keyword>
<keyword id="KW-1003">Cell membrane</keyword>
<keyword id="KW-0472">Membrane</keyword>
<keyword id="KW-0625">Polysaccharide transport</keyword>
<keyword id="KW-1185">Reference proteome</keyword>
<keyword id="KW-0762">Sugar transport</keyword>
<keyword id="KW-0812">Transmembrane</keyword>
<keyword id="KW-1133">Transmembrane helix</keyword>
<keyword id="KW-0813">Transport</keyword>
<proteinExistence type="inferred from homology"/>
<organism>
    <name type="scientific">Escherichia coli O6:H1 (strain CFT073 / ATCC 700928 / UPEC)</name>
    <dbReference type="NCBI Taxonomy" id="199310"/>
    <lineage>
        <taxon>Bacteria</taxon>
        <taxon>Pseudomonadati</taxon>
        <taxon>Pseudomonadota</taxon>
        <taxon>Gammaproteobacteria</taxon>
        <taxon>Enterobacterales</taxon>
        <taxon>Enterobacteriaceae</taxon>
        <taxon>Escherichia</taxon>
    </lineage>
</organism>
<protein>
    <recommendedName>
        <fullName>Capsule polysaccharide export inner-membrane protein KpsE</fullName>
    </recommendedName>
</protein>
<feature type="chain" id="PRO_0000084318" description="Capsule polysaccharide export inner-membrane protein KpsE">
    <location>
        <begin position="1"/>
        <end position="382"/>
    </location>
</feature>
<feature type="transmembrane region" description="Helical" evidence="2">
    <location>
        <begin position="28"/>
        <end position="48"/>
    </location>
</feature>
<feature type="transmembrane region" description="Helical" evidence="2">
    <location>
        <begin position="357"/>
        <end position="377"/>
    </location>
</feature>
<evidence type="ECO:0000250" key="1"/>
<evidence type="ECO:0000255" key="2"/>
<evidence type="ECO:0000305" key="3"/>
<sequence length="382" mass="43045">MLIKVKSAVSWMRARLSAISLADIQKHLAKIIILAPMAVLLIYLAIFSQPRYMSESKVAIKRSDDLNSGSLNFGLLLGASNPSSAEDALYLKEYINSPDMLAALDKQLNFREAFSHSGLDFLNHLSKDETAEGFLKYYKDRINVSYDDKTGLLNIQTQGFSPEFALKFNQTVLKESERFINEMSHRIARDQLAFAETEMEKARQRLDASKAELLSYQDNNNVLDPQAQAQAASTLVNTLMGQKIQMEADLRNLLTYLREDAPQVVSARNAIQSLQAQIDEEKSKITAPQGDKLNRMAVDFEEIKSKVEFNTELYKLTLTSIEKTRVEAARKLKVLSVISSPQLPQESSFPNIPYLIACWLLVCCLLFGTLKLLLAVIEDHRD</sequence>
<dbReference type="EMBL" id="AE014075">
    <property type="protein sequence ID" value="AAN82135.1"/>
    <property type="molecule type" value="Genomic_DNA"/>
</dbReference>
<dbReference type="RefSeq" id="WP_000905920.1">
    <property type="nucleotide sequence ID" value="NZ_CP051263.1"/>
</dbReference>
<dbReference type="SMR" id="P62587"/>
<dbReference type="STRING" id="199310.c3687"/>
<dbReference type="KEGG" id="ecc:c3687"/>
<dbReference type="eggNOG" id="COG3524">
    <property type="taxonomic scope" value="Bacteria"/>
</dbReference>
<dbReference type="HOGENOM" id="CLU_027864_2_0_6"/>
<dbReference type="BioCyc" id="ECOL199310:C3687-MONOMER"/>
<dbReference type="Proteomes" id="UP000001410">
    <property type="component" value="Chromosome"/>
</dbReference>
<dbReference type="GO" id="GO:0009276">
    <property type="term" value="C:Gram-negative-bacterium-type cell wall"/>
    <property type="evidence" value="ECO:0007669"/>
    <property type="project" value="InterPro"/>
</dbReference>
<dbReference type="GO" id="GO:0005886">
    <property type="term" value="C:plasma membrane"/>
    <property type="evidence" value="ECO:0007669"/>
    <property type="project" value="UniProtKB-SubCell"/>
</dbReference>
<dbReference type="GO" id="GO:0005351">
    <property type="term" value="F:carbohydrate:proton symporter activity"/>
    <property type="evidence" value="ECO:0007669"/>
    <property type="project" value="InterPro"/>
</dbReference>
<dbReference type="GO" id="GO:0004713">
    <property type="term" value="F:protein tyrosine kinase activity"/>
    <property type="evidence" value="ECO:0007669"/>
    <property type="project" value="TreeGrafter"/>
</dbReference>
<dbReference type="GO" id="GO:0015774">
    <property type="term" value="P:polysaccharide transport"/>
    <property type="evidence" value="ECO:0007669"/>
    <property type="project" value="UniProtKB-KW"/>
</dbReference>
<dbReference type="InterPro" id="IPR050445">
    <property type="entry name" value="Bact_polysacc_biosynth/exp"/>
</dbReference>
<dbReference type="InterPro" id="IPR005705">
    <property type="entry name" value="BexC_CtrB_KpsE_VexD"/>
</dbReference>
<dbReference type="NCBIfam" id="TIGR01010">
    <property type="entry name" value="BexC_CtrB_KpsE"/>
    <property type="match status" value="1"/>
</dbReference>
<dbReference type="PANTHER" id="PTHR32309:SF13">
    <property type="entry name" value="FERRIC ENTEROBACTIN TRANSPORT PROTEIN FEPE"/>
    <property type="match status" value="1"/>
</dbReference>
<dbReference type="PANTHER" id="PTHR32309">
    <property type="entry name" value="TYROSINE-PROTEIN KINASE"/>
    <property type="match status" value="1"/>
</dbReference>
<reference key="1">
    <citation type="journal article" date="2002" name="Proc. Natl. Acad. Sci. U.S.A.">
        <title>Extensive mosaic structure revealed by the complete genome sequence of uropathogenic Escherichia coli.</title>
        <authorList>
            <person name="Welch R.A."/>
            <person name="Burland V."/>
            <person name="Plunkett G. III"/>
            <person name="Redford P."/>
            <person name="Roesch P."/>
            <person name="Rasko D."/>
            <person name="Buckles E.L."/>
            <person name="Liou S.-R."/>
            <person name="Boutin A."/>
            <person name="Hackett J."/>
            <person name="Stroud D."/>
            <person name="Mayhew G.F."/>
            <person name="Rose D.J."/>
            <person name="Zhou S."/>
            <person name="Schwartz D.C."/>
            <person name="Perna N.T."/>
            <person name="Mobley H.L.T."/>
            <person name="Donnenberg M.S."/>
            <person name="Blattner F.R."/>
        </authorList>
    </citation>
    <scope>NUCLEOTIDE SEQUENCE [LARGE SCALE GENOMIC DNA]</scope>
    <source>
        <strain>CFT073 / ATCC 700928 / UPEC</strain>
    </source>
</reference>
<comment type="function">
    <text evidence="1">Involved in the translocation of the polysialic acid capsule.</text>
</comment>
<comment type="subcellular location">
    <subcellularLocation>
        <location evidence="3">Cell inner membrane</location>
        <topology evidence="3">Multi-pass membrane protein</topology>
    </subcellularLocation>
</comment>
<comment type="similarity">
    <text evidence="3">Belongs to the BexC/CtrB/KpsE family.</text>
</comment>
<accession>P62587</accession>
<accession>P42214</accession>